<dbReference type="EMBL" id="AC006580">
    <property type="protein sequence ID" value="AAM15286.1"/>
    <property type="molecule type" value="Genomic_DNA"/>
</dbReference>
<dbReference type="EMBL" id="AC006931">
    <property type="protein sequence ID" value="AAD21715.1"/>
    <property type="molecule type" value="Genomic_DNA"/>
</dbReference>
<dbReference type="EMBL" id="CP002685">
    <property type="protein sequence ID" value="AEC10189.1"/>
    <property type="molecule type" value="Genomic_DNA"/>
</dbReference>
<dbReference type="EMBL" id="BT010721">
    <property type="protein sequence ID" value="AAR20778.1"/>
    <property type="molecule type" value="mRNA"/>
</dbReference>
<dbReference type="EMBL" id="BT010995">
    <property type="protein sequence ID" value="AAR24773.1"/>
    <property type="molecule type" value="mRNA"/>
</dbReference>
<dbReference type="EMBL" id="BR000352">
    <property type="protein sequence ID" value="FAA00287.1"/>
    <property type="molecule type" value="mRNA"/>
</dbReference>
<dbReference type="PIR" id="B84860">
    <property type="entry name" value="B84860"/>
</dbReference>
<dbReference type="RefSeq" id="NP_181822.1">
    <property type="nucleotide sequence ID" value="NM_129855.3"/>
</dbReference>
<dbReference type="SMR" id="Q9SJG4"/>
<dbReference type="IntAct" id="Q9SJG4">
    <property type="interactions" value="4"/>
</dbReference>
<dbReference type="STRING" id="3702.Q9SJG4"/>
<dbReference type="PaxDb" id="3702-AT2G42940.1"/>
<dbReference type="EnsemblPlants" id="AT2G42940.1">
    <property type="protein sequence ID" value="AT2G42940.1"/>
    <property type="gene ID" value="AT2G42940"/>
</dbReference>
<dbReference type="GeneID" id="818895"/>
<dbReference type="Gramene" id="AT2G42940.1">
    <property type="protein sequence ID" value="AT2G42940.1"/>
    <property type="gene ID" value="AT2G42940"/>
</dbReference>
<dbReference type="KEGG" id="ath:AT2G42940"/>
<dbReference type="Araport" id="AT2G42940"/>
<dbReference type="TAIR" id="AT2G42940">
    <property type="gene designation" value="AHL16"/>
</dbReference>
<dbReference type="eggNOG" id="ENOG502QQZB">
    <property type="taxonomic scope" value="Eukaryota"/>
</dbReference>
<dbReference type="HOGENOM" id="CLU_039808_2_0_1"/>
<dbReference type="InParanoid" id="Q9SJG4"/>
<dbReference type="OMA" id="GCDICET"/>
<dbReference type="OrthoDB" id="780035at2759"/>
<dbReference type="PhylomeDB" id="Q9SJG4"/>
<dbReference type="PRO" id="PR:Q9SJG4"/>
<dbReference type="Proteomes" id="UP000006548">
    <property type="component" value="Chromosome 2"/>
</dbReference>
<dbReference type="ExpressionAtlas" id="Q9SJG4">
    <property type="expression patterns" value="baseline and differential"/>
</dbReference>
<dbReference type="GO" id="GO:0005634">
    <property type="term" value="C:nucleus"/>
    <property type="evidence" value="ECO:0000314"/>
    <property type="project" value="UniProtKB"/>
</dbReference>
<dbReference type="GO" id="GO:0031490">
    <property type="term" value="F:chromatin DNA binding"/>
    <property type="evidence" value="ECO:0000314"/>
    <property type="project" value="TAIR"/>
</dbReference>
<dbReference type="GO" id="GO:0003680">
    <property type="term" value="F:minor groove of adenine-thymine-rich DNA binding"/>
    <property type="evidence" value="ECO:0007669"/>
    <property type="project" value="InterPro"/>
</dbReference>
<dbReference type="GO" id="GO:0010208">
    <property type="term" value="P:pollen wall assembly"/>
    <property type="evidence" value="ECO:0000315"/>
    <property type="project" value="UniProtKB"/>
</dbReference>
<dbReference type="GO" id="GO:0010228">
    <property type="term" value="P:vegetative to reproductive phase transition of meristem"/>
    <property type="evidence" value="ECO:0000315"/>
    <property type="project" value="UniProtKB"/>
</dbReference>
<dbReference type="CDD" id="cd11378">
    <property type="entry name" value="DUF296"/>
    <property type="match status" value="1"/>
</dbReference>
<dbReference type="FunFam" id="3.30.1330.80:FF:000004">
    <property type="entry name" value="AT-hook motif nuclear-localized protein"/>
    <property type="match status" value="1"/>
</dbReference>
<dbReference type="Gene3D" id="3.30.1330.80">
    <property type="entry name" value="Hypothetical protein, similar to alpha- acetolactate decarboxylase, domain 2"/>
    <property type="match status" value="1"/>
</dbReference>
<dbReference type="InterPro" id="IPR014476">
    <property type="entry name" value="AHL15-29"/>
</dbReference>
<dbReference type="InterPro" id="IPR005175">
    <property type="entry name" value="PPC_dom"/>
</dbReference>
<dbReference type="PANTHER" id="PTHR31100">
    <property type="entry name" value="AT-HOOK MOTIF NUCLEAR-LOCALIZED PROTEIN 15"/>
    <property type="match status" value="1"/>
</dbReference>
<dbReference type="PANTHER" id="PTHR31100:SF48">
    <property type="entry name" value="AT-HOOK MOTIF NUCLEAR-LOCALIZED PROTEIN 16"/>
    <property type="match status" value="1"/>
</dbReference>
<dbReference type="Pfam" id="PF03479">
    <property type="entry name" value="PCC"/>
    <property type="match status" value="1"/>
</dbReference>
<dbReference type="PIRSF" id="PIRSF016021">
    <property type="entry name" value="ESCAROLA"/>
    <property type="match status" value="1"/>
</dbReference>
<dbReference type="SUPFAM" id="SSF117856">
    <property type="entry name" value="AF0104/ALDC/Ptd012-like"/>
    <property type="match status" value="1"/>
</dbReference>
<dbReference type="PROSITE" id="PS51742">
    <property type="entry name" value="PPC"/>
    <property type="match status" value="1"/>
</dbReference>
<reference key="1">
    <citation type="journal article" date="1999" name="Nature">
        <title>Sequence and analysis of chromosome 2 of the plant Arabidopsis thaliana.</title>
        <authorList>
            <person name="Lin X."/>
            <person name="Kaul S."/>
            <person name="Rounsley S.D."/>
            <person name="Shea T.P."/>
            <person name="Benito M.-I."/>
            <person name="Town C.D."/>
            <person name="Fujii C.Y."/>
            <person name="Mason T.M."/>
            <person name="Bowman C.L."/>
            <person name="Barnstead M.E."/>
            <person name="Feldblyum T.V."/>
            <person name="Buell C.R."/>
            <person name="Ketchum K.A."/>
            <person name="Lee J.J."/>
            <person name="Ronning C.M."/>
            <person name="Koo H.L."/>
            <person name="Moffat K.S."/>
            <person name="Cronin L.A."/>
            <person name="Shen M."/>
            <person name="Pai G."/>
            <person name="Van Aken S."/>
            <person name="Umayam L."/>
            <person name="Tallon L.J."/>
            <person name="Gill J.E."/>
            <person name="Adams M.D."/>
            <person name="Carrera A.J."/>
            <person name="Creasy T.H."/>
            <person name="Goodman H.M."/>
            <person name="Somerville C.R."/>
            <person name="Copenhaver G.P."/>
            <person name="Preuss D."/>
            <person name="Nierman W.C."/>
            <person name="White O."/>
            <person name="Eisen J.A."/>
            <person name="Salzberg S.L."/>
            <person name="Fraser C.M."/>
            <person name="Venter J.C."/>
        </authorList>
    </citation>
    <scope>NUCLEOTIDE SEQUENCE [LARGE SCALE GENOMIC DNA]</scope>
    <source>
        <strain>cv. Columbia</strain>
    </source>
</reference>
<reference key="2">
    <citation type="journal article" date="2017" name="Plant J.">
        <title>Araport11: a complete reannotation of the Arabidopsis thaliana reference genome.</title>
        <authorList>
            <person name="Cheng C.Y."/>
            <person name="Krishnakumar V."/>
            <person name="Chan A.P."/>
            <person name="Thibaud-Nissen F."/>
            <person name="Schobel S."/>
            <person name="Town C.D."/>
        </authorList>
    </citation>
    <scope>GENOME REANNOTATION</scope>
    <source>
        <strain>cv. Columbia</strain>
    </source>
</reference>
<reference key="3">
    <citation type="submission" date="2003-12" db="EMBL/GenBank/DDBJ databases">
        <title>Arabidopsis ORF clones.</title>
        <authorList>
            <person name="Shinn P."/>
            <person name="Chen H."/>
            <person name="Cheuk R.F."/>
            <person name="Kim C.J."/>
            <person name="Ecker J.R."/>
        </authorList>
    </citation>
    <scope>NUCLEOTIDE SEQUENCE [LARGE SCALE MRNA]</scope>
    <source>
        <strain>cv. Columbia</strain>
    </source>
</reference>
<reference key="4">
    <citation type="journal article" date="2004" name="Plant Mol. Biol.">
        <title>Identification of a novel plant MAR DNA binding protein localized on chromosomal surfaces.</title>
        <authorList>
            <person name="Fujimoto S."/>
            <person name="Matsunaga S."/>
            <person name="Yonemura M."/>
            <person name="Uchiyama S."/>
            <person name="Azuma T."/>
            <person name="Fukui K."/>
        </authorList>
    </citation>
    <scope>IDENTIFICATION</scope>
    <scope>GENE FAMILY</scope>
    <scope>NOMENCLATURE</scope>
    <source>
        <strain>cv. Columbia</strain>
    </source>
</reference>
<reference key="5">
    <citation type="journal article" date="2013" name="Curr. Biol.">
        <title>A matrix protein silences transposons and repeats through interaction with retinoblastoma-associated proteins.</title>
        <authorList>
            <person name="Xu Y."/>
            <person name="Wang Y."/>
            <person name="Stroud H."/>
            <person name="Gu X."/>
            <person name="Sun B."/>
            <person name="Gan E.S."/>
            <person name="Ng K.H."/>
            <person name="Jacobsen S.E."/>
            <person name="He Y."/>
            <person name="Ito T."/>
        </authorList>
    </citation>
    <scope>FUNCTION</scope>
    <scope>TISSUE SPECIFICITY</scope>
    <scope>INTERACTION WITH FVE/MSI4 AND MSI5</scope>
    <source>
        <strain>cv. Landsberg erecta</strain>
    </source>
</reference>
<reference key="6">
    <citation type="journal article" date="2013" name="Nucleus">
        <title>Flowering and genome integrity control by a nuclear matrix protein in Arabidopsis.</title>
        <authorList>
            <person name="Xu Y."/>
            <person name="Gan E.S."/>
            <person name="He Y."/>
            <person name="Ito T."/>
        </authorList>
    </citation>
    <scope>FUNCTION</scope>
</reference>
<reference key="7">
    <citation type="journal article" date="2013" name="Plant Signal. Behav.">
        <title>The AT-hook/PPC domain protein TEK negatively regulates floral repressors including MAF4 and MAF5.</title>
        <authorList>
            <person name="Xu Y."/>
            <person name="Gan E.S."/>
            <person name="Ito T."/>
        </authorList>
    </citation>
    <scope>FUNCTION</scope>
</reference>
<reference key="8">
    <citation type="journal article" date="2013" name="Proc. Natl. Acad. Sci. U.S.A.">
        <title>Arabidopsis thaliana AHL family modulates hypocotyl growth redundantly by interacting with each other via the PPC/DUF296 domain.</title>
        <authorList>
            <person name="Zhao J."/>
            <person name="Favero D.S."/>
            <person name="Peng H."/>
            <person name="Neff M.M."/>
        </authorList>
    </citation>
    <scope>GENE FAMILY</scope>
    <scope>DOMAIN PPC</scope>
</reference>
<reference key="9">
    <citation type="journal article" date="2014" name="Mol. Plant">
        <title>Arabidopsis AT-hook protein TEK positively regulates the expression of arabinogalactan proteins in controlling nexine layer formation in the pollen wall.</title>
        <authorList>
            <person name="Jia Q.S."/>
            <person name="Zhu J."/>
            <person name="Xu X.F."/>
            <person name="Lou Y."/>
            <person name="Zhang Z.L."/>
            <person name="Zhang Z.P."/>
            <person name="Yang Z.N."/>
        </authorList>
    </citation>
    <scope>FUNCTION</scope>
    <scope>MUTAGENESIS OF 57-GLY--PRO-59</scope>
</reference>
<reference key="10">
    <citation type="journal article" date="2014" name="Nat. Commun.">
        <title>The tapetal AHL family protein TEK determines nexine formation in the pollen wall.</title>
        <authorList>
            <person name="Lou Y."/>
            <person name="Xu X.F."/>
            <person name="Zhu J."/>
            <person name="Gu J.N."/>
            <person name="Blackmore S."/>
            <person name="Yang Z.N."/>
        </authorList>
    </citation>
    <scope>FUNCTION</scope>
    <scope>DISRUPTION PHENOTYPE</scope>
    <scope>SUBCELLULAR LOCATION</scope>
    <scope>TISSUE SPECIFICITY</scope>
</reference>
<accession>Q9SJG4</accession>
<sequence>MAGGTALTPTSVGSKSVPMRNHEATERGNTNNNLRALPKAVQPVSSIEGEMAKRPRGRPAGSKNKPKPPIIVTHDSPNSLRANAVEISSGCDICETLSDFARRKQRGLCILSANGCVTNVTLRQPASSGAIVTLHGRYEILSLLGSILPPPAPLGITGLTIYLAGPQGQVVGGGVVGGLIASGPVVLMAASFMNAVFDRLPMDDDEAASMQNQQYYQNGRSRPLDDIHGLPQNLLTNGNSASDIYSWGPAQRVMSKP</sequence>
<organism>
    <name type="scientific">Arabidopsis thaliana</name>
    <name type="common">Mouse-ear cress</name>
    <dbReference type="NCBI Taxonomy" id="3702"/>
    <lineage>
        <taxon>Eukaryota</taxon>
        <taxon>Viridiplantae</taxon>
        <taxon>Streptophyta</taxon>
        <taxon>Embryophyta</taxon>
        <taxon>Tracheophyta</taxon>
        <taxon>Spermatophyta</taxon>
        <taxon>Magnoliopsida</taxon>
        <taxon>eudicotyledons</taxon>
        <taxon>Gunneridae</taxon>
        <taxon>Pentapetalae</taxon>
        <taxon>rosids</taxon>
        <taxon>malvids</taxon>
        <taxon>Brassicales</taxon>
        <taxon>Brassicaceae</taxon>
        <taxon>Camelineae</taxon>
        <taxon>Arabidopsis</taxon>
    </lineage>
</organism>
<proteinExistence type="evidence at protein level"/>
<gene>
    <name evidence="11" type="primary">AHL16</name>
    <name evidence="12" type="synonym">TEK</name>
    <name evidence="13" type="ordered locus">At2g42940</name>
    <name evidence="15" type="ORF">F23E6.8</name>
    <name evidence="14" type="ORF">F7D19.6</name>
</gene>
<comment type="function">
    <text evidence="1 5 6 7 9 10">Transcription factor that specifically binds AT-rich DNA sequences related to the nuclear matrix attachment regions (MARs) (PubMed:25336567). Encodes a nuclear matrix protein that acts in the maintenance of genomic integrity by silencing TEs and repeat-containing genes through epigenetic machinery. Acts as a chromatin remodeling factor that modifies the architecture of FLC and FWA chromatin by modulating both H3 acetylation and methylation leading to the regulation of FLC and FWA expression (PubMed:23394836, PubMed:23836195). Negatively regulates floral repressors including MAF4 and MAF5 (PubMed:23733063). Plays a transcription activation role in anther development. Regulates the expression of arabinogalactan proteins (AGPs) involved in the formation of the nexine layer of the pollen wall (PubMed:24804694, PubMed:25336567). Binds AGP6, AGP11, AGP23 and AGP40 promoters (PubMed:25336567).</text>
</comment>
<comment type="subunit">
    <text evidence="5">Interacts with FVE/MSI4 and MSI5 which are components of HDAC corepressor complexes.</text>
</comment>
<comment type="subcellular location">
    <subcellularLocation>
        <location evidence="9">Nucleus</location>
    </subcellularLocation>
</comment>
<comment type="tissue specificity">
    <text evidence="5 9">Preferentially expressed in the inflorescence meristem and young floral buds, as well as in seedling-stage vegetative meristems (PubMed:23394836). Widely expressed in flowers, roots and stems, with relatively low expression in leaves (PubMed:24804694).</text>
</comment>
<comment type="developmental stage">
    <text evidence="9">Expressed in tapetum during the tetrad stage.</text>
</comment>
<comment type="domain">
    <text evidence="8">The PPC domain mediates interactions between AHL proteins.</text>
</comment>
<comment type="disruption phenotype">
    <text evidence="9">Abnormal pollen wall with the absence of the nexine and intine layers causing microspore abortion and male sterility.</text>
</comment>
<comment type="miscellaneous">
    <text evidence="5">AHL16/TEK knockdown results in late flowering phenotype.</text>
</comment>
<feature type="chain" id="PRO_0000432034" description="AT-hook motif nuclear-localized protein 16">
    <location>
        <begin position="1"/>
        <end position="257"/>
    </location>
</feature>
<feature type="domain" description="PPC" evidence="3">
    <location>
        <begin position="77"/>
        <end position="214"/>
    </location>
</feature>
<feature type="DNA-binding region" description="A.T hook" evidence="2">
    <location>
        <begin position="53"/>
        <end position="65"/>
    </location>
</feature>
<feature type="region of interest" description="Disordered" evidence="4">
    <location>
        <begin position="1"/>
        <end position="71"/>
    </location>
</feature>
<feature type="mutagenesis site" description="Reduces DNA-binding activity." evidence="10">
    <original>GRP</original>
    <variation>AAA</variation>
    <location>
        <begin position="57"/>
        <end position="59"/>
    </location>
</feature>
<name>AHL16_ARATH</name>
<protein>
    <recommendedName>
        <fullName evidence="16">AT-hook motif nuclear-localized protein 16</fullName>
    </recommendedName>
    <alternativeName>
        <fullName evidence="12">Protein TRANSPOSABLE ELEMENT SILENCING VIA AT-HOOK</fullName>
        <shortName evidence="12">Protein TEK</shortName>
    </alternativeName>
</protein>
<evidence type="ECO:0000250" key="1">
    <source>
        <dbReference type="UniProtKB" id="Q8VYJ2"/>
    </source>
</evidence>
<evidence type="ECO:0000255" key="2"/>
<evidence type="ECO:0000255" key="3">
    <source>
        <dbReference type="PROSITE-ProRule" id="PRU01078"/>
    </source>
</evidence>
<evidence type="ECO:0000256" key="4">
    <source>
        <dbReference type="SAM" id="MobiDB-lite"/>
    </source>
</evidence>
<evidence type="ECO:0000269" key="5">
    <source>
    </source>
</evidence>
<evidence type="ECO:0000269" key="6">
    <source>
    </source>
</evidence>
<evidence type="ECO:0000269" key="7">
    <source>
    </source>
</evidence>
<evidence type="ECO:0000269" key="8">
    <source>
    </source>
</evidence>
<evidence type="ECO:0000269" key="9">
    <source>
    </source>
</evidence>
<evidence type="ECO:0000269" key="10">
    <source>
    </source>
</evidence>
<evidence type="ECO:0000303" key="11">
    <source>
    </source>
</evidence>
<evidence type="ECO:0000303" key="12">
    <source>
    </source>
</evidence>
<evidence type="ECO:0000312" key="13">
    <source>
        <dbReference type="Araport" id="AT2G42940"/>
    </source>
</evidence>
<evidence type="ECO:0000312" key="14">
    <source>
        <dbReference type="EMBL" id="AAD21715.1"/>
    </source>
</evidence>
<evidence type="ECO:0000312" key="15">
    <source>
        <dbReference type="EMBL" id="AAM15286.1"/>
    </source>
</evidence>
<evidence type="ECO:0000312" key="16">
    <source>
        <dbReference type="EMBL" id="FAA00287.1"/>
    </source>
</evidence>
<keyword id="KW-0010">Activator</keyword>
<keyword id="KW-0238">DNA-binding</keyword>
<keyword id="KW-0539">Nucleus</keyword>
<keyword id="KW-1185">Reference proteome</keyword>
<keyword id="KW-0804">Transcription</keyword>
<keyword id="KW-0805">Transcription regulation</keyword>